<feature type="chain" id="PRO_1000021973" description="RNA pyrophosphohydrolase">
    <location>
        <begin position="1"/>
        <end position="159"/>
    </location>
</feature>
<feature type="domain" description="Nudix hydrolase" evidence="1">
    <location>
        <begin position="6"/>
        <end position="149"/>
    </location>
</feature>
<feature type="short sequence motif" description="Nudix box">
    <location>
        <begin position="38"/>
        <end position="59"/>
    </location>
</feature>
<dbReference type="EC" id="3.6.1.-" evidence="1"/>
<dbReference type="EMBL" id="CP000680">
    <property type="protein sequence ID" value="ABP86965.1"/>
    <property type="molecule type" value="Genomic_DNA"/>
</dbReference>
<dbReference type="SMR" id="A4Y049"/>
<dbReference type="STRING" id="399739.Pmen_4218"/>
<dbReference type="KEGG" id="pmy:Pmen_4218"/>
<dbReference type="eggNOG" id="COG0494">
    <property type="taxonomic scope" value="Bacteria"/>
</dbReference>
<dbReference type="HOGENOM" id="CLU_087195_3_1_6"/>
<dbReference type="OrthoDB" id="9816040at2"/>
<dbReference type="GO" id="GO:0005737">
    <property type="term" value="C:cytoplasm"/>
    <property type="evidence" value="ECO:0007669"/>
    <property type="project" value="TreeGrafter"/>
</dbReference>
<dbReference type="GO" id="GO:0034353">
    <property type="term" value="F:mRNA 5'-diphosphatase activity"/>
    <property type="evidence" value="ECO:0007669"/>
    <property type="project" value="TreeGrafter"/>
</dbReference>
<dbReference type="GO" id="GO:0006402">
    <property type="term" value="P:mRNA catabolic process"/>
    <property type="evidence" value="ECO:0007669"/>
    <property type="project" value="TreeGrafter"/>
</dbReference>
<dbReference type="CDD" id="cd03671">
    <property type="entry name" value="NUDIX_Ap4A_hydrolase_plant_like"/>
    <property type="match status" value="1"/>
</dbReference>
<dbReference type="FunFam" id="3.90.79.10:FF:000001">
    <property type="entry name" value="RNA pyrophosphohydrolase"/>
    <property type="match status" value="1"/>
</dbReference>
<dbReference type="Gene3D" id="3.90.79.10">
    <property type="entry name" value="Nucleoside Triphosphate Pyrophosphohydrolase"/>
    <property type="match status" value="1"/>
</dbReference>
<dbReference type="HAMAP" id="MF_00298">
    <property type="entry name" value="Nudix_RppH"/>
    <property type="match status" value="1"/>
</dbReference>
<dbReference type="InterPro" id="IPR020476">
    <property type="entry name" value="Nudix_hydrolase"/>
</dbReference>
<dbReference type="InterPro" id="IPR015797">
    <property type="entry name" value="NUDIX_hydrolase-like_dom_sf"/>
</dbReference>
<dbReference type="InterPro" id="IPR020084">
    <property type="entry name" value="NUDIX_hydrolase_CS"/>
</dbReference>
<dbReference type="InterPro" id="IPR000086">
    <property type="entry name" value="NUDIX_hydrolase_dom"/>
</dbReference>
<dbReference type="InterPro" id="IPR022927">
    <property type="entry name" value="RppH"/>
</dbReference>
<dbReference type="NCBIfam" id="NF001934">
    <property type="entry name" value="PRK00714.1-1"/>
    <property type="match status" value="1"/>
</dbReference>
<dbReference type="NCBIfam" id="NF001937">
    <property type="entry name" value="PRK00714.1-4"/>
    <property type="match status" value="1"/>
</dbReference>
<dbReference type="NCBIfam" id="NF001938">
    <property type="entry name" value="PRK00714.1-5"/>
    <property type="match status" value="1"/>
</dbReference>
<dbReference type="PANTHER" id="PTHR23114">
    <property type="entry name" value="M7GPPPN-MRNA HYDROLASE"/>
    <property type="match status" value="1"/>
</dbReference>
<dbReference type="PANTHER" id="PTHR23114:SF17">
    <property type="entry name" value="M7GPPPN-MRNA HYDROLASE"/>
    <property type="match status" value="1"/>
</dbReference>
<dbReference type="Pfam" id="PF00293">
    <property type="entry name" value="NUDIX"/>
    <property type="match status" value="1"/>
</dbReference>
<dbReference type="PRINTS" id="PR00502">
    <property type="entry name" value="NUDIXFAMILY"/>
</dbReference>
<dbReference type="SUPFAM" id="SSF55811">
    <property type="entry name" value="Nudix"/>
    <property type="match status" value="1"/>
</dbReference>
<dbReference type="PROSITE" id="PS51462">
    <property type="entry name" value="NUDIX"/>
    <property type="match status" value="1"/>
</dbReference>
<dbReference type="PROSITE" id="PS00893">
    <property type="entry name" value="NUDIX_BOX"/>
    <property type="match status" value="1"/>
</dbReference>
<comment type="function">
    <text evidence="1">Accelerates the degradation of transcripts by removing pyrophosphate from the 5'-end of triphosphorylated RNA, leading to a more labile monophosphorylated state that can stimulate subsequent ribonuclease cleavage.</text>
</comment>
<comment type="cofactor">
    <cofactor evidence="1">
        <name>a divalent metal cation</name>
        <dbReference type="ChEBI" id="CHEBI:60240"/>
    </cofactor>
</comment>
<comment type="similarity">
    <text evidence="1">Belongs to the Nudix hydrolase family. RppH subfamily.</text>
</comment>
<evidence type="ECO:0000255" key="1">
    <source>
        <dbReference type="HAMAP-Rule" id="MF_00298"/>
    </source>
</evidence>
<sequence>MIDSDGFRPNVGIILTNDVGQVLWARRINQDAWQFPQGGINDRESPEEALYRELNEEVGLEEQDVKILACTRGWLRYRLPQRLVRTHSQPLCIGQKQKWFLLRLTGAEDRVRMDLTGKPEFDGWRWVSYWYPLGQVVTFKREVYRRALKELAPRLIVRD</sequence>
<proteinExistence type="inferred from homology"/>
<protein>
    <recommendedName>
        <fullName evidence="1">RNA pyrophosphohydrolase</fullName>
        <ecNumber evidence="1">3.6.1.-</ecNumber>
    </recommendedName>
    <alternativeName>
        <fullName evidence="1">(Di)nucleoside polyphosphate hydrolase</fullName>
    </alternativeName>
</protein>
<name>RPPH_ECTM1</name>
<keyword id="KW-0378">Hydrolase</keyword>
<gene>
    <name evidence="1" type="primary">rppH</name>
    <name evidence="1" type="synonym">nudH</name>
    <name type="ordered locus">Pmen_4218</name>
</gene>
<reference key="1">
    <citation type="submission" date="2007-04" db="EMBL/GenBank/DDBJ databases">
        <title>Complete sequence of Pseudomonas mendocina ymp.</title>
        <authorList>
            <consortium name="US DOE Joint Genome Institute"/>
            <person name="Copeland A."/>
            <person name="Lucas S."/>
            <person name="Lapidus A."/>
            <person name="Barry K."/>
            <person name="Glavina del Rio T."/>
            <person name="Dalin E."/>
            <person name="Tice H."/>
            <person name="Pitluck S."/>
            <person name="Kiss H."/>
            <person name="Brettin T."/>
            <person name="Detter J.C."/>
            <person name="Bruce D."/>
            <person name="Han C."/>
            <person name="Schmutz J."/>
            <person name="Larimer F."/>
            <person name="Land M."/>
            <person name="Hauser L."/>
            <person name="Kyrpides N."/>
            <person name="Mikhailova N."/>
            <person name="Hersman L."/>
            <person name="Dubois J."/>
            <person name="Maurice P."/>
            <person name="Richardson P."/>
        </authorList>
    </citation>
    <scope>NUCLEOTIDE SEQUENCE [LARGE SCALE GENOMIC DNA]</scope>
    <source>
        <strain>ymp</strain>
    </source>
</reference>
<organism>
    <name type="scientific">Ectopseudomonas mendocina (strain ymp)</name>
    <name type="common">Pseudomonas mendocina</name>
    <dbReference type="NCBI Taxonomy" id="399739"/>
    <lineage>
        <taxon>Bacteria</taxon>
        <taxon>Pseudomonadati</taxon>
        <taxon>Pseudomonadota</taxon>
        <taxon>Gammaproteobacteria</taxon>
        <taxon>Pseudomonadales</taxon>
        <taxon>Pseudomonadaceae</taxon>
        <taxon>Ectopseudomonas</taxon>
    </lineage>
</organism>
<accession>A4Y049</accession>